<keyword id="KW-0001">2Fe-2S</keyword>
<keyword id="KW-0004">4Fe-4S</keyword>
<keyword id="KW-0093">Biotin biosynthesis</keyword>
<keyword id="KW-0408">Iron</keyword>
<keyword id="KW-0411">Iron-sulfur</keyword>
<keyword id="KW-0479">Metal-binding</keyword>
<keyword id="KW-0949">S-adenosyl-L-methionine</keyword>
<keyword id="KW-0808">Transferase</keyword>
<organism>
    <name type="scientific">Histophilus somni (strain 129Pt)</name>
    <name type="common">Haemophilus somnus</name>
    <dbReference type="NCBI Taxonomy" id="205914"/>
    <lineage>
        <taxon>Bacteria</taxon>
        <taxon>Pseudomonadati</taxon>
        <taxon>Pseudomonadota</taxon>
        <taxon>Gammaproteobacteria</taxon>
        <taxon>Pasteurellales</taxon>
        <taxon>Pasteurellaceae</taxon>
        <taxon>Histophilus</taxon>
    </lineage>
</organism>
<gene>
    <name evidence="1" type="primary">bioB</name>
    <name type="ordered locus">HS_1010</name>
</gene>
<comment type="function">
    <text evidence="1">Catalyzes the conversion of dethiobiotin (DTB) to biotin by the insertion of a sulfur atom into dethiobiotin via a radical-based mechanism.</text>
</comment>
<comment type="catalytic activity">
    <reaction evidence="1">
        <text>(4R,5S)-dethiobiotin + (sulfur carrier)-SH + 2 reduced [2Fe-2S]-[ferredoxin] + 2 S-adenosyl-L-methionine = (sulfur carrier)-H + biotin + 2 5'-deoxyadenosine + 2 L-methionine + 2 oxidized [2Fe-2S]-[ferredoxin]</text>
        <dbReference type="Rhea" id="RHEA:22060"/>
        <dbReference type="Rhea" id="RHEA-COMP:10000"/>
        <dbReference type="Rhea" id="RHEA-COMP:10001"/>
        <dbReference type="Rhea" id="RHEA-COMP:14737"/>
        <dbReference type="Rhea" id="RHEA-COMP:14739"/>
        <dbReference type="ChEBI" id="CHEBI:17319"/>
        <dbReference type="ChEBI" id="CHEBI:29917"/>
        <dbReference type="ChEBI" id="CHEBI:33737"/>
        <dbReference type="ChEBI" id="CHEBI:33738"/>
        <dbReference type="ChEBI" id="CHEBI:57586"/>
        <dbReference type="ChEBI" id="CHEBI:57844"/>
        <dbReference type="ChEBI" id="CHEBI:59789"/>
        <dbReference type="ChEBI" id="CHEBI:64428"/>
        <dbReference type="ChEBI" id="CHEBI:149473"/>
        <dbReference type="EC" id="2.8.1.6"/>
    </reaction>
</comment>
<comment type="cofactor">
    <cofactor evidence="1">
        <name>[4Fe-4S] cluster</name>
        <dbReference type="ChEBI" id="CHEBI:49883"/>
    </cofactor>
    <text evidence="1">Binds 1 [4Fe-4S] cluster. The cluster is coordinated with 3 cysteines and an exchangeable S-adenosyl-L-methionine.</text>
</comment>
<comment type="cofactor">
    <cofactor evidence="1">
        <name>[2Fe-2S] cluster</name>
        <dbReference type="ChEBI" id="CHEBI:190135"/>
    </cofactor>
    <text evidence="1">Binds 1 [2Fe-2S] cluster. The cluster is coordinated with 3 cysteines and 1 arginine.</text>
</comment>
<comment type="pathway">
    <text evidence="1">Cofactor biosynthesis; biotin biosynthesis; biotin from 7,8-diaminononanoate: step 2/2.</text>
</comment>
<comment type="subunit">
    <text evidence="1">Homodimer.</text>
</comment>
<comment type="similarity">
    <text evidence="1">Belongs to the radical SAM superfamily. Biotin synthase family.</text>
</comment>
<protein>
    <recommendedName>
        <fullName evidence="1">Biotin synthase</fullName>
        <ecNumber evidence="1">2.8.1.6</ecNumber>
    </recommendedName>
</protein>
<feature type="chain" id="PRO_0000381418" description="Biotin synthase">
    <location>
        <begin position="1"/>
        <end position="331"/>
    </location>
</feature>
<feature type="domain" description="Radical SAM core" evidence="2">
    <location>
        <begin position="51"/>
        <end position="278"/>
    </location>
</feature>
<feature type="binding site" evidence="1">
    <location>
        <position position="66"/>
    </location>
    <ligand>
        <name>[4Fe-4S] cluster</name>
        <dbReference type="ChEBI" id="CHEBI:49883"/>
        <note>4Fe-4S-S-AdoMet</note>
    </ligand>
</feature>
<feature type="binding site" evidence="1">
    <location>
        <position position="70"/>
    </location>
    <ligand>
        <name>[4Fe-4S] cluster</name>
        <dbReference type="ChEBI" id="CHEBI:49883"/>
        <note>4Fe-4S-S-AdoMet</note>
    </ligand>
</feature>
<feature type="binding site" evidence="1">
    <location>
        <position position="73"/>
    </location>
    <ligand>
        <name>[4Fe-4S] cluster</name>
        <dbReference type="ChEBI" id="CHEBI:49883"/>
        <note>4Fe-4S-S-AdoMet</note>
    </ligand>
</feature>
<feature type="binding site" evidence="1">
    <location>
        <position position="110"/>
    </location>
    <ligand>
        <name>[2Fe-2S] cluster</name>
        <dbReference type="ChEBI" id="CHEBI:190135"/>
    </ligand>
</feature>
<feature type="binding site" evidence="1">
    <location>
        <position position="141"/>
    </location>
    <ligand>
        <name>[2Fe-2S] cluster</name>
        <dbReference type="ChEBI" id="CHEBI:190135"/>
    </ligand>
</feature>
<feature type="binding site" evidence="1">
    <location>
        <position position="201"/>
    </location>
    <ligand>
        <name>[2Fe-2S] cluster</name>
        <dbReference type="ChEBI" id="CHEBI:190135"/>
    </ligand>
</feature>
<feature type="binding site" evidence="1">
    <location>
        <position position="273"/>
    </location>
    <ligand>
        <name>[2Fe-2S] cluster</name>
        <dbReference type="ChEBI" id="CHEBI:190135"/>
    </ligand>
</feature>
<accession>Q0I355</accession>
<proteinExistence type="inferred from homology"/>
<dbReference type="EC" id="2.8.1.6" evidence="1"/>
<dbReference type="EMBL" id="CP000436">
    <property type="protein sequence ID" value="ABI25285.1"/>
    <property type="molecule type" value="Genomic_DNA"/>
</dbReference>
<dbReference type="SMR" id="Q0I355"/>
<dbReference type="KEGG" id="hso:HS_1010"/>
<dbReference type="eggNOG" id="COG0502">
    <property type="taxonomic scope" value="Bacteria"/>
</dbReference>
<dbReference type="HOGENOM" id="CLU_033172_1_2_6"/>
<dbReference type="UniPathway" id="UPA00078">
    <property type="reaction ID" value="UER00162"/>
</dbReference>
<dbReference type="GO" id="GO:0051537">
    <property type="term" value="F:2 iron, 2 sulfur cluster binding"/>
    <property type="evidence" value="ECO:0007669"/>
    <property type="project" value="UniProtKB-KW"/>
</dbReference>
<dbReference type="GO" id="GO:0051539">
    <property type="term" value="F:4 iron, 4 sulfur cluster binding"/>
    <property type="evidence" value="ECO:0007669"/>
    <property type="project" value="UniProtKB-KW"/>
</dbReference>
<dbReference type="GO" id="GO:0004076">
    <property type="term" value="F:biotin synthase activity"/>
    <property type="evidence" value="ECO:0007669"/>
    <property type="project" value="UniProtKB-UniRule"/>
</dbReference>
<dbReference type="GO" id="GO:0005506">
    <property type="term" value="F:iron ion binding"/>
    <property type="evidence" value="ECO:0007669"/>
    <property type="project" value="UniProtKB-UniRule"/>
</dbReference>
<dbReference type="GO" id="GO:0009102">
    <property type="term" value="P:biotin biosynthetic process"/>
    <property type="evidence" value="ECO:0007669"/>
    <property type="project" value="UniProtKB-UniRule"/>
</dbReference>
<dbReference type="CDD" id="cd01335">
    <property type="entry name" value="Radical_SAM"/>
    <property type="match status" value="1"/>
</dbReference>
<dbReference type="FunFam" id="3.20.20.70:FF:000011">
    <property type="entry name" value="Biotin synthase"/>
    <property type="match status" value="1"/>
</dbReference>
<dbReference type="Gene3D" id="3.20.20.70">
    <property type="entry name" value="Aldolase class I"/>
    <property type="match status" value="1"/>
</dbReference>
<dbReference type="HAMAP" id="MF_01694">
    <property type="entry name" value="BioB"/>
    <property type="match status" value="1"/>
</dbReference>
<dbReference type="InterPro" id="IPR013785">
    <property type="entry name" value="Aldolase_TIM"/>
</dbReference>
<dbReference type="InterPro" id="IPR010722">
    <property type="entry name" value="BATS_dom"/>
</dbReference>
<dbReference type="InterPro" id="IPR002684">
    <property type="entry name" value="Biotin_synth/BioAB"/>
</dbReference>
<dbReference type="InterPro" id="IPR024177">
    <property type="entry name" value="Biotin_synthase"/>
</dbReference>
<dbReference type="InterPro" id="IPR006638">
    <property type="entry name" value="Elp3/MiaA/NifB-like_rSAM"/>
</dbReference>
<dbReference type="InterPro" id="IPR007197">
    <property type="entry name" value="rSAM"/>
</dbReference>
<dbReference type="NCBIfam" id="TIGR00433">
    <property type="entry name" value="bioB"/>
    <property type="match status" value="1"/>
</dbReference>
<dbReference type="PANTHER" id="PTHR22976">
    <property type="entry name" value="BIOTIN SYNTHASE"/>
    <property type="match status" value="1"/>
</dbReference>
<dbReference type="PANTHER" id="PTHR22976:SF2">
    <property type="entry name" value="BIOTIN SYNTHASE, MITOCHONDRIAL"/>
    <property type="match status" value="1"/>
</dbReference>
<dbReference type="Pfam" id="PF06968">
    <property type="entry name" value="BATS"/>
    <property type="match status" value="1"/>
</dbReference>
<dbReference type="Pfam" id="PF04055">
    <property type="entry name" value="Radical_SAM"/>
    <property type="match status" value="1"/>
</dbReference>
<dbReference type="PIRSF" id="PIRSF001619">
    <property type="entry name" value="Biotin_synth"/>
    <property type="match status" value="1"/>
</dbReference>
<dbReference type="SFLD" id="SFLDF00272">
    <property type="entry name" value="biotin_synthase"/>
    <property type="match status" value="1"/>
</dbReference>
<dbReference type="SFLD" id="SFLDG01278">
    <property type="entry name" value="biotin_synthase_like"/>
    <property type="match status" value="1"/>
</dbReference>
<dbReference type="SMART" id="SM00876">
    <property type="entry name" value="BATS"/>
    <property type="match status" value="1"/>
</dbReference>
<dbReference type="SMART" id="SM00729">
    <property type="entry name" value="Elp3"/>
    <property type="match status" value="1"/>
</dbReference>
<dbReference type="SUPFAM" id="SSF102114">
    <property type="entry name" value="Radical SAM enzymes"/>
    <property type="match status" value="1"/>
</dbReference>
<dbReference type="PROSITE" id="PS51918">
    <property type="entry name" value="RADICAL_SAM"/>
    <property type="match status" value="1"/>
</dbReference>
<name>BIOB_HISS1</name>
<reference key="1">
    <citation type="journal article" date="2007" name="J. Bacteriol.">
        <title>Complete genome sequence of Haemophilus somnus (Histophilus somni) strain 129Pt and comparison to Haemophilus ducreyi 35000HP and Haemophilus influenzae Rd.</title>
        <authorList>
            <person name="Challacombe J.F."/>
            <person name="Duncan A.J."/>
            <person name="Brettin T.S."/>
            <person name="Bruce D."/>
            <person name="Chertkov O."/>
            <person name="Detter J.C."/>
            <person name="Han C.S."/>
            <person name="Misra M."/>
            <person name="Richardson P."/>
            <person name="Tapia R."/>
            <person name="Thayer N."/>
            <person name="Xie G."/>
            <person name="Inzana T.J."/>
        </authorList>
    </citation>
    <scope>NUCLEOTIDE SEQUENCE [LARGE SCALE GENOMIC DNA]</scope>
    <source>
        <strain>129Pt</strain>
    </source>
</reference>
<sequence length="331" mass="36715">MTIITINIPSLTPHPCVEYWSVCKVEALFETPFLELVYQAAQVHRKHFNPQTIQLSTLMSIKTGGCPEDCSYCPQSARYHTGVQNQQLLCVEEIVEKAKIAKSRGAGRFCMGAAWRGPKPKDIEKITEIIKAVKDLGLETCGTFGLLQDGMAEELKEAGLDYYNHNIDTAPEHYKEIIGTRDFDDRLNTLGKVRKAGLKVCCGGIVGMNETRKERAGLIASLANLDPQPESVPINQLVKVEGTPLADAQELDWTEFVRTIAVARITMPKSYVRLSAGRQGMSEEMQAMCFMAGANSIFYGDKLLVTVNPEEDGDQLLMAKLDLKPETQENK</sequence>
<evidence type="ECO:0000255" key="1">
    <source>
        <dbReference type="HAMAP-Rule" id="MF_01694"/>
    </source>
</evidence>
<evidence type="ECO:0000255" key="2">
    <source>
        <dbReference type="PROSITE-ProRule" id="PRU01266"/>
    </source>
</evidence>